<gene>
    <name evidence="5" type="primary">PRD3</name>
    <name evidence="7" type="ordered locus">At1g01690</name>
    <name evidence="8" type="ORF">T1N6.6</name>
</gene>
<comment type="function">
    <text evidence="3">Involved in DNA cleavage that forms the double-strand breaks (DSB) that initiate meiotic recombination.</text>
</comment>
<comment type="subunit">
    <text evidence="4">Interacts with PRD1; this interaction facilitates a binding to DFO.</text>
</comment>
<comment type="subcellular location">
    <subcellularLocation>
        <location evidence="1">Nucleus</location>
    </subcellularLocation>
</comment>
<comment type="disruption phenotype">
    <text evidence="3">Drastic decrease in chiasma formation at metaphase I associated with an absence of synapsis in prophase, due to the inability to make double-strand breaks (DSB).</text>
</comment>
<comment type="sequence caution" evidence="6">
    <conflict type="erroneous gene model prediction">
        <sequence resource="EMBL-CDS" id="AAF78420"/>
    </conflict>
</comment>
<comment type="sequence caution" evidence="6">
    <conflict type="erroneous gene model prediction">
        <sequence resource="EMBL-CDS" id="ANM60353"/>
    </conflict>
</comment>
<name>PRD3_ARATH</name>
<organism>
    <name type="scientific">Arabidopsis thaliana</name>
    <name type="common">Mouse-ear cress</name>
    <dbReference type="NCBI Taxonomy" id="3702"/>
    <lineage>
        <taxon>Eukaryota</taxon>
        <taxon>Viridiplantae</taxon>
        <taxon>Streptophyta</taxon>
        <taxon>Embryophyta</taxon>
        <taxon>Tracheophyta</taxon>
        <taxon>Spermatophyta</taxon>
        <taxon>Magnoliopsida</taxon>
        <taxon>eudicotyledons</taxon>
        <taxon>Gunneridae</taxon>
        <taxon>Pentapetalae</taxon>
        <taxon>rosids</taxon>
        <taxon>malvids</taxon>
        <taxon>Brassicales</taxon>
        <taxon>Brassicaceae</taxon>
        <taxon>Camelineae</taxon>
        <taxon>Arabidopsis</taxon>
    </lineage>
</organism>
<accession>Q0WWX5</accession>
<accession>A0A178WD31</accession>
<accession>A0A1P8AUM4</accession>
<accession>Q9LQ91</accession>
<reference key="1">
    <citation type="journal article" date="2000" name="Nature">
        <title>Sequence and analysis of chromosome 1 of the plant Arabidopsis thaliana.</title>
        <authorList>
            <person name="Theologis A."/>
            <person name="Ecker J.R."/>
            <person name="Palm C.J."/>
            <person name="Federspiel N.A."/>
            <person name="Kaul S."/>
            <person name="White O."/>
            <person name="Alonso J."/>
            <person name="Altafi H."/>
            <person name="Araujo R."/>
            <person name="Bowman C.L."/>
            <person name="Brooks S.Y."/>
            <person name="Buehler E."/>
            <person name="Chan A."/>
            <person name="Chao Q."/>
            <person name="Chen H."/>
            <person name="Cheuk R.F."/>
            <person name="Chin C.W."/>
            <person name="Chung M.K."/>
            <person name="Conn L."/>
            <person name="Conway A.B."/>
            <person name="Conway A.R."/>
            <person name="Creasy T.H."/>
            <person name="Dewar K."/>
            <person name="Dunn P."/>
            <person name="Etgu P."/>
            <person name="Feldblyum T.V."/>
            <person name="Feng J.-D."/>
            <person name="Fong B."/>
            <person name="Fujii C.Y."/>
            <person name="Gill J.E."/>
            <person name="Goldsmith A.D."/>
            <person name="Haas B."/>
            <person name="Hansen N.F."/>
            <person name="Hughes B."/>
            <person name="Huizar L."/>
            <person name="Hunter J.L."/>
            <person name="Jenkins J."/>
            <person name="Johnson-Hopson C."/>
            <person name="Khan S."/>
            <person name="Khaykin E."/>
            <person name="Kim C.J."/>
            <person name="Koo H.L."/>
            <person name="Kremenetskaia I."/>
            <person name="Kurtz D.B."/>
            <person name="Kwan A."/>
            <person name="Lam B."/>
            <person name="Langin-Hooper S."/>
            <person name="Lee A."/>
            <person name="Lee J.M."/>
            <person name="Lenz C.A."/>
            <person name="Li J.H."/>
            <person name="Li Y.-P."/>
            <person name="Lin X."/>
            <person name="Liu S.X."/>
            <person name="Liu Z.A."/>
            <person name="Luros J.S."/>
            <person name="Maiti R."/>
            <person name="Marziali A."/>
            <person name="Militscher J."/>
            <person name="Miranda M."/>
            <person name="Nguyen M."/>
            <person name="Nierman W.C."/>
            <person name="Osborne B.I."/>
            <person name="Pai G."/>
            <person name="Peterson J."/>
            <person name="Pham P.K."/>
            <person name="Rizzo M."/>
            <person name="Rooney T."/>
            <person name="Rowley D."/>
            <person name="Sakano H."/>
            <person name="Salzberg S.L."/>
            <person name="Schwartz J.R."/>
            <person name="Shinn P."/>
            <person name="Southwick A.M."/>
            <person name="Sun H."/>
            <person name="Tallon L.J."/>
            <person name="Tambunga G."/>
            <person name="Toriumi M.J."/>
            <person name="Town C.D."/>
            <person name="Utterback T."/>
            <person name="Van Aken S."/>
            <person name="Vaysberg M."/>
            <person name="Vysotskaia V.S."/>
            <person name="Walker M."/>
            <person name="Wu D."/>
            <person name="Yu G."/>
            <person name="Fraser C.M."/>
            <person name="Venter J.C."/>
            <person name="Davis R.W."/>
        </authorList>
    </citation>
    <scope>NUCLEOTIDE SEQUENCE [LARGE SCALE GENOMIC DNA]</scope>
    <source>
        <strain>cv. Columbia</strain>
    </source>
</reference>
<reference key="2">
    <citation type="journal article" date="2017" name="Plant J.">
        <title>Araport11: a complete reannotation of the Arabidopsis thaliana reference genome.</title>
        <authorList>
            <person name="Cheng C.Y."/>
            <person name="Krishnakumar V."/>
            <person name="Chan A.P."/>
            <person name="Thibaud-Nissen F."/>
            <person name="Schobel S."/>
            <person name="Town C.D."/>
        </authorList>
    </citation>
    <scope>GENOME REANNOTATION</scope>
    <source>
        <strain>cv. Columbia</strain>
    </source>
</reference>
<reference key="3">
    <citation type="submission" date="2006-07" db="EMBL/GenBank/DDBJ databases">
        <title>Large-scale analysis of RIKEN Arabidopsis full-length (RAFL) cDNAs.</title>
        <authorList>
            <person name="Totoki Y."/>
            <person name="Seki M."/>
            <person name="Ishida J."/>
            <person name="Nakajima M."/>
            <person name="Enju A."/>
            <person name="Kamiya A."/>
            <person name="Narusaka M."/>
            <person name="Shin-i T."/>
            <person name="Nakagawa M."/>
            <person name="Sakamoto N."/>
            <person name="Oishi K."/>
            <person name="Kohara Y."/>
            <person name="Kobayashi M."/>
            <person name="Toyoda A."/>
            <person name="Sakaki Y."/>
            <person name="Sakurai T."/>
            <person name="Iida K."/>
            <person name="Akiyama K."/>
            <person name="Satou M."/>
            <person name="Toyoda T."/>
            <person name="Konagaya A."/>
            <person name="Carninci P."/>
            <person name="Kawai J."/>
            <person name="Hayashizaki Y."/>
            <person name="Shinozaki K."/>
        </authorList>
    </citation>
    <scope>NUCLEOTIDE SEQUENCE [LARGE SCALE MRNA] OF 1-366</scope>
    <source>
        <strain>cv. Columbia</strain>
    </source>
</reference>
<reference key="4">
    <citation type="journal article" date="2009" name="PLoS Genet.">
        <title>A high throughput genetic screen identifies new early meiotic recombination functions in Arabidopsis thaliana.</title>
        <authorList>
            <person name="De Muyt A."/>
            <person name="Pereira L."/>
            <person name="Vezon D."/>
            <person name="Chelysheva L."/>
            <person name="Gendrot G."/>
            <person name="Chambon A."/>
            <person name="Laine-Choinard S."/>
            <person name="Pelletier G."/>
            <person name="Mercier R."/>
            <person name="Nogue F."/>
            <person name="Grelon M."/>
        </authorList>
    </citation>
    <scope>FUNCTION</scope>
    <scope>DISRUPTION PHENOTYPE</scope>
</reference>
<reference key="5">
    <citation type="journal article" date="2017" name="Sci. Rep.">
        <title>MTOPVIB interacts with AtPRD1 and plays important roles in formation of meiotic DNA double-strand breaks in Arabidopsis.</title>
        <authorList>
            <person name="Tang Y."/>
            <person name="Yin Z."/>
            <person name="Zeng Y."/>
            <person name="Zhang Q."/>
            <person name="Chen L."/>
            <person name="He Y."/>
            <person name="Lu P."/>
            <person name="Ye D."/>
            <person name="Zhang X."/>
        </authorList>
    </citation>
    <scope>INTERACTION WITH PRD1</scope>
    <source>
        <strain>cv. Columbia</strain>
        <strain>cv. Landsberg erecta</strain>
    </source>
</reference>
<sequence>MKMNINKACDLKSISVFPPNLRRSAEPQASQQLRSQQSQQSFSQGPSSSQRGCGGFSQMTQSSIDELLINDQRFSSQERDLSLKKVSSCLPPINHKREDSQLVASRSSSGLSRRWSSASIGESKSQISEELEQRFGMMETSLSRFGMMLDSIQSDIMQANRGTKEVFLETERIQQKLTLQDTSLQQLRKEQADSKASLDGGVKFILEEFSKDPNQEKLQKILQMLTTIPEQVETALQKIQREICHTFTREIQVLASLRTPEPRVRVPTAPQVKAKENLPEQRGQAAKVLTSLKMPEPRVQVPAAPQAKENFPEQRGPVAKSNSFCNTTLKTKQPQFPRNPNDASARAVKPYLSPKIQVGCWKTVKPEKSNFKKRATRKPVKSESTRTQFEQCSVVIDSDEEDIDGGFSCLINENTRGTNFEWDAEKETERILRTARRTKRKFGNPIIIN</sequence>
<feature type="chain" id="PRO_0000448441" description="Putative recombination initiation defects 3">
    <location>
        <begin position="1"/>
        <end position="449"/>
    </location>
</feature>
<feature type="region of interest" description="Disordered" evidence="2">
    <location>
        <begin position="21"/>
        <end position="56"/>
    </location>
</feature>
<feature type="short sequence motif" description="Nuclear localization signal" evidence="1">
    <location>
        <begin position="437"/>
        <end position="441"/>
    </location>
</feature>
<feature type="compositionally biased region" description="Low complexity" evidence="2">
    <location>
        <begin position="28"/>
        <end position="50"/>
    </location>
</feature>
<keyword id="KW-0469">Meiosis</keyword>
<keyword id="KW-0539">Nucleus</keyword>
<keyword id="KW-1185">Reference proteome</keyword>
<protein>
    <recommendedName>
        <fullName evidence="5">Putative recombination initiation defects 3</fullName>
        <shortName evidence="5">AtPRD3</shortName>
    </recommendedName>
</protein>
<proteinExistence type="evidence at protein level"/>
<evidence type="ECO:0000255" key="1"/>
<evidence type="ECO:0000256" key="2">
    <source>
        <dbReference type="SAM" id="MobiDB-lite"/>
    </source>
</evidence>
<evidence type="ECO:0000269" key="3">
    <source>
    </source>
</evidence>
<evidence type="ECO:0000269" key="4">
    <source>
    </source>
</evidence>
<evidence type="ECO:0000303" key="5">
    <source>
    </source>
</evidence>
<evidence type="ECO:0000305" key="6"/>
<evidence type="ECO:0000312" key="7">
    <source>
        <dbReference type="Araport" id="AT1G01690"/>
    </source>
</evidence>
<evidence type="ECO:0000312" key="8">
    <source>
        <dbReference type="EMBL" id="AAF78420.1"/>
    </source>
</evidence>
<dbReference type="EMBL" id="AC009273">
    <property type="protein sequence ID" value="AAF78420.1"/>
    <property type="status" value="ALT_SEQ"/>
    <property type="molecule type" value="Genomic_DNA"/>
</dbReference>
<dbReference type="EMBL" id="CP002684">
    <property type="protein sequence ID" value="ANM60353.1"/>
    <property type="status" value="ALT_SEQ"/>
    <property type="molecule type" value="Genomic_DNA"/>
</dbReference>
<dbReference type="EMBL" id="AK226208">
    <property type="protein sequence ID" value="BAE98373.1"/>
    <property type="molecule type" value="mRNA"/>
</dbReference>
<dbReference type="PIR" id="G86147">
    <property type="entry name" value="G86147"/>
</dbReference>
<dbReference type="RefSeq" id="NP_001322648.1">
    <property type="nucleotide sequence ID" value="NM_001331292.1"/>
</dbReference>
<dbReference type="SASBDB" id="Q0WWX5"/>
<dbReference type="SMR" id="Q0WWX5"/>
<dbReference type="FunCoup" id="Q0WWX5">
    <property type="interactions" value="1"/>
</dbReference>
<dbReference type="STRING" id="3702.Q0WWX5"/>
<dbReference type="PaxDb" id="3702-AT1G01690.1"/>
<dbReference type="GeneID" id="839243"/>
<dbReference type="KEGG" id="ath:AT1G01690"/>
<dbReference type="Araport" id="AT1G01690"/>
<dbReference type="TAIR" id="AT1G01690">
    <property type="gene designation" value="PRD3"/>
</dbReference>
<dbReference type="InParanoid" id="Q0WWX5"/>
<dbReference type="PRO" id="PR:Q0WWX5"/>
<dbReference type="Proteomes" id="UP000006548">
    <property type="component" value="Chromosome 1"/>
</dbReference>
<dbReference type="ExpressionAtlas" id="Q0WWX5">
    <property type="expression patterns" value="baseline and differential"/>
</dbReference>
<dbReference type="GO" id="GO:0005634">
    <property type="term" value="C:nucleus"/>
    <property type="evidence" value="ECO:0000318"/>
    <property type="project" value="GO_Central"/>
</dbReference>
<dbReference type="GO" id="GO:0070192">
    <property type="term" value="P:chromosome organization involved in meiotic cell cycle"/>
    <property type="evidence" value="ECO:0007669"/>
    <property type="project" value="InterPro"/>
</dbReference>
<dbReference type="GO" id="GO:0009553">
    <property type="term" value="P:embryo sac development"/>
    <property type="evidence" value="ECO:0000318"/>
    <property type="project" value="GO_Central"/>
</dbReference>
<dbReference type="GO" id="GO:0042138">
    <property type="term" value="P:meiotic DNA double-strand break formation"/>
    <property type="evidence" value="ECO:0000318"/>
    <property type="project" value="GO_Central"/>
</dbReference>
<dbReference type="GO" id="GO:0009556">
    <property type="term" value="P:microsporogenesis"/>
    <property type="evidence" value="ECO:0000318"/>
    <property type="project" value="GO_Central"/>
</dbReference>
<dbReference type="InterPro" id="IPR034546">
    <property type="entry name" value="PAIR1"/>
</dbReference>
<dbReference type="PANTHER" id="PTHR37695">
    <property type="entry name" value="RECOMBINATION INITIATION DEFECTS 3-RELATED"/>
    <property type="match status" value="1"/>
</dbReference>
<dbReference type="PANTHER" id="PTHR37695:SF1">
    <property type="entry name" value="RECOMBINATION INITIATION DEFECTS 3-RELATED"/>
    <property type="match status" value="1"/>
</dbReference>